<gene>
    <name type="primary">dapE</name>
    <name type="ordered locus">SE_0216</name>
</gene>
<dbReference type="EC" id="3.5.1.18"/>
<dbReference type="EMBL" id="AE015929">
    <property type="protein sequence ID" value="AAO03813.1"/>
    <property type="molecule type" value="Genomic_DNA"/>
</dbReference>
<dbReference type="RefSeq" id="NP_763771.1">
    <property type="nucleotide sequence ID" value="NC_004461.1"/>
</dbReference>
<dbReference type="RefSeq" id="WP_002485521.1">
    <property type="nucleotide sequence ID" value="NZ_WBME01000011.1"/>
</dbReference>
<dbReference type="SMR" id="Q8CQC2"/>
<dbReference type="KEGG" id="sep:SE_0216"/>
<dbReference type="PATRIC" id="fig|176280.10.peg.195"/>
<dbReference type="eggNOG" id="COG0624">
    <property type="taxonomic scope" value="Bacteria"/>
</dbReference>
<dbReference type="HOGENOM" id="CLU_021802_2_2_9"/>
<dbReference type="OrthoDB" id="9792335at2"/>
<dbReference type="UniPathway" id="UPA00034">
    <property type="reaction ID" value="UER00021"/>
</dbReference>
<dbReference type="Proteomes" id="UP000001411">
    <property type="component" value="Chromosome"/>
</dbReference>
<dbReference type="GO" id="GO:0046872">
    <property type="term" value="F:metal ion binding"/>
    <property type="evidence" value="ECO:0007669"/>
    <property type="project" value="UniProtKB-KW"/>
</dbReference>
<dbReference type="GO" id="GO:0009014">
    <property type="term" value="F:succinyl-diaminopimelate desuccinylase activity"/>
    <property type="evidence" value="ECO:0007669"/>
    <property type="project" value="UniProtKB-EC"/>
</dbReference>
<dbReference type="GO" id="GO:0019877">
    <property type="term" value="P:diaminopimelate biosynthetic process"/>
    <property type="evidence" value="ECO:0007669"/>
    <property type="project" value="UniProtKB-KW"/>
</dbReference>
<dbReference type="GO" id="GO:0009089">
    <property type="term" value="P:lysine biosynthetic process via diaminopimelate"/>
    <property type="evidence" value="ECO:0007669"/>
    <property type="project" value="UniProtKB-UniPathway"/>
</dbReference>
<dbReference type="CDD" id="cd08659">
    <property type="entry name" value="M20_ArgE_DapE-like"/>
    <property type="match status" value="1"/>
</dbReference>
<dbReference type="Gene3D" id="3.30.70.360">
    <property type="match status" value="1"/>
</dbReference>
<dbReference type="Gene3D" id="3.40.630.10">
    <property type="entry name" value="Zn peptidases"/>
    <property type="match status" value="2"/>
</dbReference>
<dbReference type="InterPro" id="IPR010182">
    <property type="entry name" value="ArgE/DapE"/>
</dbReference>
<dbReference type="InterPro" id="IPR001261">
    <property type="entry name" value="ArgE/DapE_CS"/>
</dbReference>
<dbReference type="InterPro" id="IPR036264">
    <property type="entry name" value="Bact_exopeptidase_dim_dom"/>
</dbReference>
<dbReference type="InterPro" id="IPR002933">
    <property type="entry name" value="Peptidase_M20"/>
</dbReference>
<dbReference type="InterPro" id="IPR011650">
    <property type="entry name" value="Peptidase_M20_dimer"/>
</dbReference>
<dbReference type="InterPro" id="IPR050072">
    <property type="entry name" value="Peptidase_M20A"/>
</dbReference>
<dbReference type="NCBIfam" id="TIGR01910">
    <property type="entry name" value="DapE-ArgE"/>
    <property type="match status" value="1"/>
</dbReference>
<dbReference type="NCBIfam" id="NF006365">
    <property type="entry name" value="PRK08588.1"/>
    <property type="match status" value="1"/>
</dbReference>
<dbReference type="PANTHER" id="PTHR43808">
    <property type="entry name" value="ACETYLORNITHINE DEACETYLASE"/>
    <property type="match status" value="1"/>
</dbReference>
<dbReference type="PANTHER" id="PTHR43808:SF8">
    <property type="entry name" value="PEPTIDASE M20 DIMERISATION DOMAIN-CONTAINING PROTEIN"/>
    <property type="match status" value="1"/>
</dbReference>
<dbReference type="Pfam" id="PF07687">
    <property type="entry name" value="M20_dimer"/>
    <property type="match status" value="1"/>
</dbReference>
<dbReference type="Pfam" id="PF01546">
    <property type="entry name" value="Peptidase_M20"/>
    <property type="match status" value="1"/>
</dbReference>
<dbReference type="SUPFAM" id="SSF55031">
    <property type="entry name" value="Bacterial exopeptidase dimerisation domain"/>
    <property type="match status" value="1"/>
</dbReference>
<dbReference type="SUPFAM" id="SSF53187">
    <property type="entry name" value="Zn-dependent exopeptidases"/>
    <property type="match status" value="1"/>
</dbReference>
<dbReference type="PROSITE" id="PS00758">
    <property type="entry name" value="ARGE_DAPE_CPG2_1"/>
    <property type="match status" value="1"/>
</dbReference>
<dbReference type="PROSITE" id="PS00759">
    <property type="entry name" value="ARGE_DAPE_CPG2_2"/>
    <property type="match status" value="1"/>
</dbReference>
<name>DAPE_STAES</name>
<comment type="catalytic activity">
    <reaction>
        <text>N-succinyl-(2S,6S)-2,6-diaminopimelate + H2O = (2S,6S)-2,6-diaminopimelate + succinate</text>
        <dbReference type="Rhea" id="RHEA:22608"/>
        <dbReference type="ChEBI" id="CHEBI:15377"/>
        <dbReference type="ChEBI" id="CHEBI:30031"/>
        <dbReference type="ChEBI" id="CHEBI:57609"/>
        <dbReference type="ChEBI" id="CHEBI:58087"/>
        <dbReference type="EC" id="3.5.1.18"/>
    </reaction>
</comment>
<comment type="cofactor">
    <cofactor evidence="1">
        <name>Zn(2+)</name>
        <dbReference type="ChEBI" id="CHEBI:29105"/>
    </cofactor>
    <cofactor evidence="1">
        <name>Co(2+)</name>
        <dbReference type="ChEBI" id="CHEBI:48828"/>
    </cofactor>
    <text evidence="1">Binds 2 Zn(2+) or Co(2+) ions per subunit.</text>
</comment>
<comment type="pathway">
    <text>Amino-acid biosynthesis; L-lysine biosynthesis via DAP pathway; LL-2,6-diaminopimelate from (S)-tetrahydrodipicolinate (succinylase route): step 3/3.</text>
</comment>
<comment type="similarity">
    <text evidence="2">Belongs to the peptidase M20A family.</text>
</comment>
<sequence>MTVLSEQDKIRLLADIVKIQTENDHEIEVCEYLKDLLSQYDIDSKIVKVNDSRANLVAEIGSGAPVLAISGHMDVVDAGDHDDWTFPPFELTDKDGKLFGRGTTDMKGGLMAMVIAMIELKQSNALKQGTIRLLATTGEETEQYGAQLLADEGYLDDVSGLIIGEPTSNIAYYAHKGSMSCVVTAKGKAAHSSMPHLGTNAVDILVDFVNEMKQEYKNIKEHDKVHELDAVPMIEKHLHRKIGEEESHIYSGFVMLNSVFNGGKQVNSVPHKATAKYNVRTVPEYDSTFVKDLFEKVIRHVGENYLTVDIPSSHDPVASDRDNPLIQNITRIAPNYVHEDIVVSALIGTTDASSFLGTNENNVDFAVFGPGESIMAHQVDEFIRKDMYLSYIDVYKDVFKAYLEK</sequence>
<accession>Q8CQC2</accession>
<proteinExistence type="inferred from homology"/>
<keyword id="KW-0028">Amino-acid biosynthesis</keyword>
<keyword id="KW-0170">Cobalt</keyword>
<keyword id="KW-0220">Diaminopimelate biosynthesis</keyword>
<keyword id="KW-0378">Hydrolase</keyword>
<keyword id="KW-0457">Lysine biosynthesis</keyword>
<keyword id="KW-0479">Metal-binding</keyword>
<keyword id="KW-0862">Zinc</keyword>
<reference key="1">
    <citation type="journal article" date="2003" name="Mol. Microbiol.">
        <title>Genome-based analysis of virulence genes in a non-biofilm-forming Staphylococcus epidermidis strain (ATCC 12228).</title>
        <authorList>
            <person name="Zhang Y.-Q."/>
            <person name="Ren S.-X."/>
            <person name="Li H.-L."/>
            <person name="Wang Y.-X."/>
            <person name="Fu G."/>
            <person name="Yang J."/>
            <person name="Qin Z.-Q."/>
            <person name="Miao Y.-G."/>
            <person name="Wang W.-Y."/>
            <person name="Chen R.-S."/>
            <person name="Shen Y."/>
            <person name="Chen Z."/>
            <person name="Yuan Z.-H."/>
            <person name="Zhao G.-P."/>
            <person name="Qu D."/>
            <person name="Danchin A."/>
            <person name="Wen Y.-M."/>
        </authorList>
    </citation>
    <scope>NUCLEOTIDE SEQUENCE [LARGE SCALE GENOMIC DNA]</scope>
    <source>
        <strain>ATCC 12228 / FDA PCI 1200</strain>
    </source>
</reference>
<protein>
    <recommendedName>
        <fullName>Probable succinyl-diaminopimelate desuccinylase</fullName>
        <shortName>SDAP desuccinylase</shortName>
        <ecNumber>3.5.1.18</ecNumber>
    </recommendedName>
</protein>
<evidence type="ECO:0000250" key="1"/>
<evidence type="ECO:0000305" key="2"/>
<organism>
    <name type="scientific">Staphylococcus epidermidis (strain ATCC 12228 / FDA PCI 1200)</name>
    <dbReference type="NCBI Taxonomy" id="176280"/>
    <lineage>
        <taxon>Bacteria</taxon>
        <taxon>Bacillati</taxon>
        <taxon>Bacillota</taxon>
        <taxon>Bacilli</taxon>
        <taxon>Bacillales</taxon>
        <taxon>Staphylococcaceae</taxon>
        <taxon>Staphylococcus</taxon>
    </lineage>
</organism>
<feature type="chain" id="PRO_0000185269" description="Probable succinyl-diaminopimelate desuccinylase">
    <location>
        <begin position="1"/>
        <end position="405"/>
    </location>
</feature>
<feature type="active site" evidence="1">
    <location>
        <position position="74"/>
    </location>
</feature>
<feature type="active site" description="Proton acceptor" evidence="1">
    <location>
        <position position="139"/>
    </location>
</feature>
<feature type="binding site" evidence="1">
    <location>
        <position position="72"/>
    </location>
    <ligand>
        <name>Zn(2+)</name>
        <dbReference type="ChEBI" id="CHEBI:29105"/>
        <label>1</label>
    </ligand>
</feature>
<feature type="binding site" evidence="1">
    <location>
        <position position="105"/>
    </location>
    <ligand>
        <name>Zn(2+)</name>
        <dbReference type="ChEBI" id="CHEBI:29105"/>
        <label>1</label>
    </ligand>
</feature>
<feature type="binding site" evidence="1">
    <location>
        <position position="105"/>
    </location>
    <ligand>
        <name>Zn(2+)</name>
        <dbReference type="ChEBI" id="CHEBI:29105"/>
        <label>2</label>
    </ligand>
</feature>
<feature type="binding site" evidence="1">
    <location>
        <position position="140"/>
    </location>
    <ligand>
        <name>Zn(2+)</name>
        <dbReference type="ChEBI" id="CHEBI:29105"/>
        <label>2</label>
    </ligand>
</feature>
<feature type="binding site" evidence="1">
    <location>
        <position position="165"/>
    </location>
    <ligand>
        <name>Zn(2+)</name>
        <dbReference type="ChEBI" id="CHEBI:29105"/>
        <label>1</label>
    </ligand>
</feature>
<feature type="binding site" evidence="1">
    <location>
        <position position="377"/>
    </location>
    <ligand>
        <name>Zn(2+)</name>
        <dbReference type="ChEBI" id="CHEBI:29105"/>
        <label>2</label>
    </ligand>
</feature>